<comment type="function">
    <text evidence="1">Catalyzes the NADPH-dependent reduction of L-glutamate 5-phosphate into L-glutamate 5-semialdehyde and phosphate. The product spontaneously undergoes cyclization to form 1-pyrroline-5-carboxylate.</text>
</comment>
<comment type="catalytic activity">
    <reaction evidence="1">
        <text>L-glutamate 5-semialdehyde + phosphate + NADP(+) = L-glutamyl 5-phosphate + NADPH + H(+)</text>
        <dbReference type="Rhea" id="RHEA:19541"/>
        <dbReference type="ChEBI" id="CHEBI:15378"/>
        <dbReference type="ChEBI" id="CHEBI:43474"/>
        <dbReference type="ChEBI" id="CHEBI:57783"/>
        <dbReference type="ChEBI" id="CHEBI:58066"/>
        <dbReference type="ChEBI" id="CHEBI:58274"/>
        <dbReference type="ChEBI" id="CHEBI:58349"/>
        <dbReference type="EC" id="1.2.1.41"/>
    </reaction>
</comment>
<comment type="pathway">
    <text evidence="1">Amino-acid biosynthesis; L-proline biosynthesis; L-glutamate 5-semialdehyde from L-glutamate: step 2/2.</text>
</comment>
<comment type="subcellular location">
    <subcellularLocation>
        <location evidence="1">Cytoplasm</location>
    </subcellularLocation>
</comment>
<comment type="similarity">
    <text evidence="1">Belongs to the gamma-glutamyl phosphate reductase family.</text>
</comment>
<gene>
    <name evidence="1" type="primary">proA</name>
    <name type="ordered locus">SRU_1253</name>
</gene>
<evidence type="ECO:0000255" key="1">
    <source>
        <dbReference type="HAMAP-Rule" id="MF_00412"/>
    </source>
</evidence>
<dbReference type="EC" id="1.2.1.41" evidence="1"/>
<dbReference type="EMBL" id="CP000159">
    <property type="protein sequence ID" value="ABC43824.1"/>
    <property type="molecule type" value="Genomic_DNA"/>
</dbReference>
<dbReference type="RefSeq" id="YP_445377.1">
    <property type="nucleotide sequence ID" value="NC_007677.1"/>
</dbReference>
<dbReference type="SMR" id="Q2S354"/>
<dbReference type="STRING" id="309807.SRU_1253"/>
<dbReference type="EnsemblBacteria" id="ABC43824">
    <property type="protein sequence ID" value="ABC43824"/>
    <property type="gene ID" value="SRU_1253"/>
</dbReference>
<dbReference type="KEGG" id="sru:SRU_1253"/>
<dbReference type="PATRIC" id="fig|309807.25.peg.1299"/>
<dbReference type="eggNOG" id="COG0014">
    <property type="taxonomic scope" value="Bacteria"/>
</dbReference>
<dbReference type="HOGENOM" id="CLU_030231_0_0_10"/>
<dbReference type="OrthoDB" id="9809970at2"/>
<dbReference type="UniPathway" id="UPA00098">
    <property type="reaction ID" value="UER00360"/>
</dbReference>
<dbReference type="Proteomes" id="UP000008674">
    <property type="component" value="Chromosome"/>
</dbReference>
<dbReference type="GO" id="GO:0005737">
    <property type="term" value="C:cytoplasm"/>
    <property type="evidence" value="ECO:0007669"/>
    <property type="project" value="UniProtKB-SubCell"/>
</dbReference>
<dbReference type="GO" id="GO:0004350">
    <property type="term" value="F:glutamate-5-semialdehyde dehydrogenase activity"/>
    <property type="evidence" value="ECO:0007669"/>
    <property type="project" value="UniProtKB-UniRule"/>
</dbReference>
<dbReference type="GO" id="GO:0050661">
    <property type="term" value="F:NADP binding"/>
    <property type="evidence" value="ECO:0007669"/>
    <property type="project" value="InterPro"/>
</dbReference>
<dbReference type="GO" id="GO:0055129">
    <property type="term" value="P:L-proline biosynthetic process"/>
    <property type="evidence" value="ECO:0007669"/>
    <property type="project" value="UniProtKB-UniRule"/>
</dbReference>
<dbReference type="CDD" id="cd07079">
    <property type="entry name" value="ALDH_F18-19_ProA-GPR"/>
    <property type="match status" value="1"/>
</dbReference>
<dbReference type="FunFam" id="3.40.309.10:FF:000006">
    <property type="entry name" value="Gamma-glutamyl phosphate reductase"/>
    <property type="match status" value="1"/>
</dbReference>
<dbReference type="Gene3D" id="3.40.605.10">
    <property type="entry name" value="Aldehyde Dehydrogenase, Chain A, domain 1"/>
    <property type="match status" value="1"/>
</dbReference>
<dbReference type="Gene3D" id="3.40.309.10">
    <property type="entry name" value="Aldehyde Dehydrogenase, Chain A, domain 2"/>
    <property type="match status" value="1"/>
</dbReference>
<dbReference type="HAMAP" id="MF_00412">
    <property type="entry name" value="ProA"/>
    <property type="match status" value="1"/>
</dbReference>
<dbReference type="InterPro" id="IPR016161">
    <property type="entry name" value="Ald_DH/histidinol_DH"/>
</dbReference>
<dbReference type="InterPro" id="IPR016163">
    <property type="entry name" value="Ald_DH_C"/>
</dbReference>
<dbReference type="InterPro" id="IPR016162">
    <property type="entry name" value="Ald_DH_N"/>
</dbReference>
<dbReference type="InterPro" id="IPR015590">
    <property type="entry name" value="Aldehyde_DH_dom"/>
</dbReference>
<dbReference type="InterPro" id="IPR020593">
    <property type="entry name" value="G-glutamylP_reductase_CS"/>
</dbReference>
<dbReference type="InterPro" id="IPR012134">
    <property type="entry name" value="Glu-5-SA_DH"/>
</dbReference>
<dbReference type="InterPro" id="IPR000965">
    <property type="entry name" value="GPR_dom"/>
</dbReference>
<dbReference type="NCBIfam" id="NF001221">
    <property type="entry name" value="PRK00197.1"/>
    <property type="match status" value="1"/>
</dbReference>
<dbReference type="NCBIfam" id="TIGR00407">
    <property type="entry name" value="proA"/>
    <property type="match status" value="1"/>
</dbReference>
<dbReference type="PANTHER" id="PTHR11063:SF8">
    <property type="entry name" value="DELTA-1-PYRROLINE-5-CARBOXYLATE SYNTHASE"/>
    <property type="match status" value="1"/>
</dbReference>
<dbReference type="PANTHER" id="PTHR11063">
    <property type="entry name" value="GLUTAMATE SEMIALDEHYDE DEHYDROGENASE"/>
    <property type="match status" value="1"/>
</dbReference>
<dbReference type="Pfam" id="PF00171">
    <property type="entry name" value="Aldedh"/>
    <property type="match status" value="1"/>
</dbReference>
<dbReference type="PIRSF" id="PIRSF000151">
    <property type="entry name" value="GPR"/>
    <property type="match status" value="1"/>
</dbReference>
<dbReference type="SUPFAM" id="SSF53720">
    <property type="entry name" value="ALDH-like"/>
    <property type="match status" value="1"/>
</dbReference>
<dbReference type="PROSITE" id="PS01223">
    <property type="entry name" value="PROA"/>
    <property type="match status" value="1"/>
</dbReference>
<protein>
    <recommendedName>
        <fullName evidence="1">Gamma-glutamyl phosphate reductase</fullName>
        <shortName evidence="1">GPR</shortName>
        <ecNumber evidence="1">1.2.1.41</ecNumber>
    </recommendedName>
    <alternativeName>
        <fullName evidence="1">Glutamate-5-semialdehyde dehydrogenase</fullName>
    </alternativeName>
    <alternativeName>
        <fullName evidence="1">Glutamyl-gamma-semialdehyde dehydrogenase</fullName>
        <shortName evidence="1">GSA dehydrogenase</shortName>
    </alternativeName>
</protein>
<sequence length="436" mass="46442">MNKQINSVAPMSDTTSEALSVDALAADCKAAARELSTLSTETKNRTLRRMADALEADEEAILAANGKDVSAAREEGLDDALIDRLVLNPDRITKMADALRDVASFADPVGEMGGTTKRPSGIEVGKMRIPLGVIGMIYEARPNVTADAAGLCFKAGNAVLLRGGSNAFHSNQAVAAALHTALEAEGVPPAAVTLIPTTDRAAVQEMLTLNQHLDLIIPRGGEGLIRFVDETSQIPVIKHYKGVCHLYVDEDADLEVAEDLLLDGKVSRPSVCNALETLLVHADVADDFLPRARALLDDAGVELRGDDRTRQLLPGVGAATEDDYAAEYLDLTLAARVVESDDEALNHIAEYGSNHTEVIVTDRLPTARRFVRSVDASVVLVNASSRFSDGGELGLGAEIGISTTKLHAYGPMGLEALTTEKFVVYGEGETRHPVEK</sequence>
<reference key="1">
    <citation type="journal article" date="2005" name="Proc. Natl. Acad. Sci. U.S.A.">
        <title>The genome of Salinibacter ruber: convergence and gene exchange among hyperhalophilic bacteria and archaea.</title>
        <authorList>
            <person name="Mongodin E.F."/>
            <person name="Nelson K.E."/>
            <person name="Daugherty S."/>
            <person name="DeBoy R.T."/>
            <person name="Wister J."/>
            <person name="Khouri H."/>
            <person name="Weidman J."/>
            <person name="Walsh D.A."/>
            <person name="Papke R.T."/>
            <person name="Sanchez Perez G."/>
            <person name="Sharma A.K."/>
            <person name="Nesbo C.L."/>
            <person name="MacLeod D."/>
            <person name="Bapteste E."/>
            <person name="Doolittle W.F."/>
            <person name="Charlebois R.L."/>
            <person name="Legault B."/>
            <person name="Rodriguez-Valera F."/>
        </authorList>
    </citation>
    <scope>NUCLEOTIDE SEQUENCE [LARGE SCALE GENOMIC DNA]</scope>
    <source>
        <strain>DSM 13855 / CECT 5946 / M31</strain>
    </source>
</reference>
<feature type="chain" id="PRO_0000252591" description="Gamma-glutamyl phosphate reductase">
    <location>
        <begin position="1"/>
        <end position="436"/>
    </location>
</feature>
<proteinExistence type="inferred from homology"/>
<organism>
    <name type="scientific">Salinibacter ruber (strain DSM 13855 / M31)</name>
    <dbReference type="NCBI Taxonomy" id="309807"/>
    <lineage>
        <taxon>Bacteria</taxon>
        <taxon>Pseudomonadati</taxon>
        <taxon>Rhodothermota</taxon>
        <taxon>Rhodothermia</taxon>
        <taxon>Rhodothermales</taxon>
        <taxon>Salinibacteraceae</taxon>
        <taxon>Salinibacter</taxon>
    </lineage>
</organism>
<keyword id="KW-0028">Amino-acid biosynthesis</keyword>
<keyword id="KW-0963">Cytoplasm</keyword>
<keyword id="KW-0521">NADP</keyword>
<keyword id="KW-0560">Oxidoreductase</keyword>
<keyword id="KW-0641">Proline biosynthesis</keyword>
<keyword id="KW-1185">Reference proteome</keyword>
<name>PROA_SALRD</name>
<accession>Q2S354</accession>